<evidence type="ECO:0000250" key="1"/>
<evidence type="ECO:0000255" key="2"/>
<evidence type="ECO:0000305" key="3"/>
<sequence>MAITMRTLVAFVFTIFFIISFVHSRTTTSGYGMLFDSVACEGGFEYCPRGGGNDKCTTFCRSLPNKYDFGVCDKIYACCCHINV</sequence>
<feature type="signal peptide" evidence="2">
    <location>
        <begin position="1"/>
        <end position="24"/>
    </location>
</feature>
<feature type="chain" id="PRO_0000379691" description="Defensin-like protein 199">
    <location>
        <begin position="25"/>
        <end position="84"/>
    </location>
</feature>
<feature type="disulfide bond" evidence="1">
    <location>
        <begin position="40"/>
        <end position="80"/>
    </location>
</feature>
<feature type="disulfide bond" evidence="1">
    <location>
        <begin position="47"/>
        <end position="72"/>
    </location>
</feature>
<feature type="disulfide bond" evidence="1">
    <location>
        <begin position="56"/>
        <end position="78"/>
    </location>
</feature>
<feature type="disulfide bond" evidence="1">
    <location>
        <begin position="60"/>
        <end position="79"/>
    </location>
</feature>
<name>DF199_ARATH</name>
<keyword id="KW-0929">Antimicrobial</keyword>
<keyword id="KW-1015">Disulfide bond</keyword>
<keyword id="KW-0295">Fungicide</keyword>
<keyword id="KW-0611">Plant defense</keyword>
<keyword id="KW-1185">Reference proteome</keyword>
<keyword id="KW-0964">Secreted</keyword>
<keyword id="KW-0732">Signal</keyword>
<reference key="1">
    <citation type="journal article" date="2000" name="Nature">
        <title>Sequence and analysis of chromosome 1 of the plant Arabidopsis thaliana.</title>
        <authorList>
            <person name="Theologis A."/>
            <person name="Ecker J.R."/>
            <person name="Palm C.J."/>
            <person name="Federspiel N.A."/>
            <person name="Kaul S."/>
            <person name="White O."/>
            <person name="Alonso J."/>
            <person name="Altafi H."/>
            <person name="Araujo R."/>
            <person name="Bowman C.L."/>
            <person name="Brooks S.Y."/>
            <person name="Buehler E."/>
            <person name="Chan A."/>
            <person name="Chao Q."/>
            <person name="Chen H."/>
            <person name="Cheuk R.F."/>
            <person name="Chin C.W."/>
            <person name="Chung M.K."/>
            <person name="Conn L."/>
            <person name="Conway A.B."/>
            <person name="Conway A.R."/>
            <person name="Creasy T.H."/>
            <person name="Dewar K."/>
            <person name="Dunn P."/>
            <person name="Etgu P."/>
            <person name="Feldblyum T.V."/>
            <person name="Feng J.-D."/>
            <person name="Fong B."/>
            <person name="Fujii C.Y."/>
            <person name="Gill J.E."/>
            <person name="Goldsmith A.D."/>
            <person name="Haas B."/>
            <person name="Hansen N.F."/>
            <person name="Hughes B."/>
            <person name="Huizar L."/>
            <person name="Hunter J.L."/>
            <person name="Jenkins J."/>
            <person name="Johnson-Hopson C."/>
            <person name="Khan S."/>
            <person name="Khaykin E."/>
            <person name="Kim C.J."/>
            <person name="Koo H.L."/>
            <person name="Kremenetskaia I."/>
            <person name="Kurtz D.B."/>
            <person name="Kwan A."/>
            <person name="Lam B."/>
            <person name="Langin-Hooper S."/>
            <person name="Lee A."/>
            <person name="Lee J.M."/>
            <person name="Lenz C.A."/>
            <person name="Li J.H."/>
            <person name="Li Y.-P."/>
            <person name="Lin X."/>
            <person name="Liu S.X."/>
            <person name="Liu Z.A."/>
            <person name="Luros J.S."/>
            <person name="Maiti R."/>
            <person name="Marziali A."/>
            <person name="Militscher J."/>
            <person name="Miranda M."/>
            <person name="Nguyen M."/>
            <person name="Nierman W.C."/>
            <person name="Osborne B.I."/>
            <person name="Pai G."/>
            <person name="Peterson J."/>
            <person name="Pham P.K."/>
            <person name="Rizzo M."/>
            <person name="Rooney T."/>
            <person name="Rowley D."/>
            <person name="Sakano H."/>
            <person name="Salzberg S.L."/>
            <person name="Schwartz J.R."/>
            <person name="Shinn P."/>
            <person name="Southwick A.M."/>
            <person name="Sun H."/>
            <person name="Tallon L.J."/>
            <person name="Tambunga G."/>
            <person name="Toriumi M.J."/>
            <person name="Town C.D."/>
            <person name="Utterback T."/>
            <person name="Van Aken S."/>
            <person name="Vaysberg M."/>
            <person name="Vysotskaia V.S."/>
            <person name="Walker M."/>
            <person name="Wu D."/>
            <person name="Yu G."/>
            <person name="Fraser C.M."/>
            <person name="Venter J.C."/>
            <person name="Davis R.W."/>
        </authorList>
    </citation>
    <scope>NUCLEOTIDE SEQUENCE [LARGE SCALE GENOMIC DNA]</scope>
    <source>
        <strain>cv. Columbia</strain>
    </source>
</reference>
<reference key="2">
    <citation type="journal article" date="2017" name="Plant J.">
        <title>Araport11: a complete reannotation of the Arabidopsis thaliana reference genome.</title>
        <authorList>
            <person name="Cheng C.Y."/>
            <person name="Krishnakumar V."/>
            <person name="Chan A.P."/>
            <person name="Thibaud-Nissen F."/>
            <person name="Schobel S."/>
            <person name="Town C.D."/>
        </authorList>
    </citation>
    <scope>GENOME REANNOTATION</scope>
    <source>
        <strain>cv. Columbia</strain>
    </source>
</reference>
<reference key="3">
    <citation type="journal article" date="2006" name="Plant Biotechnol. J.">
        <title>Simultaneous high-throughput recombinational cloning of open reading frames in closed and open configurations.</title>
        <authorList>
            <person name="Underwood B.A."/>
            <person name="Vanderhaeghen R."/>
            <person name="Whitford R."/>
            <person name="Town C.D."/>
            <person name="Hilson P."/>
        </authorList>
    </citation>
    <scope>NUCLEOTIDE SEQUENCE [LARGE SCALE MRNA]</scope>
    <source>
        <strain>cv. Columbia</strain>
    </source>
</reference>
<reference key="4">
    <citation type="journal article" date="2007" name="Plant J.">
        <title>Small cysteine-rich peptides resembling antimicrobial peptides have been under-predicted in plants.</title>
        <authorList>
            <person name="Silverstein K.A.T."/>
            <person name="Moskal W.A. Jr."/>
            <person name="Wu H.C."/>
            <person name="Underwood B.A."/>
            <person name="Graham M.A."/>
            <person name="Town C.D."/>
            <person name="VandenBosch K.A."/>
        </authorList>
    </citation>
    <scope>NUCLEOTIDE SEQUENCE [LARGE SCALE MRNA]</scope>
    <source>
        <strain>cv. Columbia</strain>
    </source>
</reference>
<reference key="5">
    <citation type="journal article" date="2005" name="Plant Physiol.">
        <title>Genome organization of more than 300 defensin-like genes in Arabidopsis.</title>
        <authorList>
            <person name="Silverstein K.A.T."/>
            <person name="Graham M.A."/>
            <person name="Paape T.D."/>
            <person name="VandenBosch K.A."/>
        </authorList>
    </citation>
    <scope>GENE FAMILY</scope>
</reference>
<proteinExistence type="inferred from homology"/>
<comment type="subcellular location">
    <subcellularLocation>
        <location evidence="1">Secreted</location>
    </subcellularLocation>
</comment>
<comment type="similarity">
    <text evidence="3">Belongs to the DEFL family.</text>
</comment>
<accession>Q2V4G5</accession>
<dbReference type="EMBL" id="AC009323">
    <property type="status" value="NOT_ANNOTATED_CDS"/>
    <property type="molecule type" value="Genomic_DNA"/>
</dbReference>
<dbReference type="EMBL" id="CP002684">
    <property type="protein sequence ID" value="AEE33407.1"/>
    <property type="molecule type" value="Genomic_DNA"/>
</dbReference>
<dbReference type="EMBL" id="DQ912208">
    <property type="protein sequence ID" value="ABI34016.1"/>
    <property type="molecule type" value="mRNA"/>
</dbReference>
<dbReference type="EMBL" id="EF182772">
    <property type="status" value="NOT_ANNOTATED_CDS"/>
    <property type="molecule type" value="mRNA"/>
</dbReference>
<dbReference type="RefSeq" id="NP_001031200.1">
    <property type="nucleotide sequence ID" value="NM_001036123.3"/>
</dbReference>
<dbReference type="STRING" id="3702.Q2V4G5"/>
<dbReference type="PaxDb" id="3702-AT1G56553.1"/>
<dbReference type="ProteomicsDB" id="224083"/>
<dbReference type="EnsemblPlants" id="AT1G56553.1">
    <property type="protein sequence ID" value="AT1G56553.1"/>
    <property type="gene ID" value="AT1G56553"/>
</dbReference>
<dbReference type="GeneID" id="3767470"/>
<dbReference type="Gramene" id="AT1G56553.1">
    <property type="protein sequence ID" value="AT1G56553.1"/>
    <property type="gene ID" value="AT1G56553"/>
</dbReference>
<dbReference type="KEGG" id="ath:AT1G56553"/>
<dbReference type="Araport" id="AT1G56553"/>
<dbReference type="TAIR" id="AT1G56553"/>
<dbReference type="HOGENOM" id="CLU_183259_0_0_1"/>
<dbReference type="InParanoid" id="Q2V4G5"/>
<dbReference type="OMA" id="MAITMRT"/>
<dbReference type="PhylomeDB" id="Q2V4G5"/>
<dbReference type="PRO" id="PR:Q2V4G5"/>
<dbReference type="Proteomes" id="UP000006548">
    <property type="component" value="Chromosome 1"/>
</dbReference>
<dbReference type="ExpressionAtlas" id="Q2V4G5">
    <property type="expression patterns" value="baseline"/>
</dbReference>
<dbReference type="GO" id="GO:0005576">
    <property type="term" value="C:extracellular region"/>
    <property type="evidence" value="ECO:0007669"/>
    <property type="project" value="UniProtKB-SubCell"/>
</dbReference>
<dbReference type="GO" id="GO:0050832">
    <property type="term" value="P:defense response to fungus"/>
    <property type="evidence" value="ECO:0007669"/>
    <property type="project" value="UniProtKB-KW"/>
</dbReference>
<dbReference type="GO" id="GO:0031640">
    <property type="term" value="P:killing of cells of another organism"/>
    <property type="evidence" value="ECO:0007669"/>
    <property type="project" value="UniProtKB-KW"/>
</dbReference>
<organism>
    <name type="scientific">Arabidopsis thaliana</name>
    <name type="common">Mouse-ear cress</name>
    <dbReference type="NCBI Taxonomy" id="3702"/>
    <lineage>
        <taxon>Eukaryota</taxon>
        <taxon>Viridiplantae</taxon>
        <taxon>Streptophyta</taxon>
        <taxon>Embryophyta</taxon>
        <taxon>Tracheophyta</taxon>
        <taxon>Spermatophyta</taxon>
        <taxon>Magnoliopsida</taxon>
        <taxon>eudicotyledons</taxon>
        <taxon>Gunneridae</taxon>
        <taxon>Pentapetalae</taxon>
        <taxon>rosids</taxon>
        <taxon>malvids</taxon>
        <taxon>Brassicales</taxon>
        <taxon>Brassicaceae</taxon>
        <taxon>Camelineae</taxon>
        <taxon>Arabidopsis</taxon>
    </lineage>
</organism>
<gene>
    <name type="ordered locus">At1g56553</name>
    <name type="ORF">F25P12</name>
</gene>
<protein>
    <recommendedName>
        <fullName>Defensin-like protein 199</fullName>
    </recommendedName>
</protein>